<name>CYB_DICDI</name>
<proteinExistence type="inferred from homology"/>
<dbReference type="EMBL" id="D16466">
    <property type="protein sequence ID" value="BAA03933.1"/>
    <property type="molecule type" value="Genomic_DNA"/>
</dbReference>
<dbReference type="EMBL" id="AB000109">
    <property type="protein sequence ID" value="BAA78061.1"/>
    <property type="molecule type" value="Genomic_DNA"/>
</dbReference>
<dbReference type="PIR" id="S68155">
    <property type="entry name" value="S68155"/>
</dbReference>
<dbReference type="RefSeq" id="NP_050079.1">
    <property type="nucleotide sequence ID" value="NC_000895.1"/>
</dbReference>
<dbReference type="SMR" id="Q37311"/>
<dbReference type="FunCoup" id="Q37311">
    <property type="interactions" value="20"/>
</dbReference>
<dbReference type="STRING" id="44689.Q37311"/>
<dbReference type="GeneID" id="2193899"/>
<dbReference type="KEGG" id="ddi:DidioMp12"/>
<dbReference type="dictyBase" id="DDB_G0294078">
    <property type="gene designation" value="cytB"/>
</dbReference>
<dbReference type="VEuPathDB" id="AmoebaDB:DidioMp12"/>
<dbReference type="InParanoid" id="Q37311"/>
<dbReference type="OMA" id="NISAWWN"/>
<dbReference type="PhylomeDB" id="Q37311"/>
<dbReference type="Reactome" id="R-DDI-611105">
    <property type="pathway name" value="Respiratory electron transport"/>
</dbReference>
<dbReference type="PRO" id="PR:Q37311"/>
<dbReference type="Proteomes" id="UP000002195">
    <property type="component" value="Mitochondrion"/>
</dbReference>
<dbReference type="GO" id="GO:0016020">
    <property type="term" value="C:membrane"/>
    <property type="evidence" value="ECO:0000318"/>
    <property type="project" value="GO_Central"/>
</dbReference>
<dbReference type="GO" id="GO:0005743">
    <property type="term" value="C:mitochondrial inner membrane"/>
    <property type="evidence" value="ECO:0007669"/>
    <property type="project" value="UniProtKB-SubCell"/>
</dbReference>
<dbReference type="GO" id="GO:0045275">
    <property type="term" value="C:respiratory chain complex III"/>
    <property type="evidence" value="ECO:0000318"/>
    <property type="project" value="GO_Central"/>
</dbReference>
<dbReference type="GO" id="GO:0046872">
    <property type="term" value="F:metal ion binding"/>
    <property type="evidence" value="ECO:0007669"/>
    <property type="project" value="UniProtKB-KW"/>
</dbReference>
<dbReference type="GO" id="GO:0008121">
    <property type="term" value="F:ubiquinol-cytochrome-c reductase activity"/>
    <property type="evidence" value="ECO:0007669"/>
    <property type="project" value="InterPro"/>
</dbReference>
<dbReference type="GO" id="GO:0006122">
    <property type="term" value="P:mitochondrial electron transport, ubiquinol to cytochrome c"/>
    <property type="evidence" value="ECO:0000318"/>
    <property type="project" value="GO_Central"/>
</dbReference>
<dbReference type="CDD" id="cd00290">
    <property type="entry name" value="cytochrome_b_C"/>
    <property type="match status" value="1"/>
</dbReference>
<dbReference type="CDD" id="cd00284">
    <property type="entry name" value="Cytochrome_b_N"/>
    <property type="match status" value="1"/>
</dbReference>
<dbReference type="Gene3D" id="1.20.810.10">
    <property type="entry name" value="Cytochrome Bc1 Complex, Chain C"/>
    <property type="match status" value="1"/>
</dbReference>
<dbReference type="InterPro" id="IPR005798">
    <property type="entry name" value="Cyt_b/b6_C"/>
</dbReference>
<dbReference type="InterPro" id="IPR036150">
    <property type="entry name" value="Cyt_b/b6_C_sf"/>
</dbReference>
<dbReference type="InterPro" id="IPR005797">
    <property type="entry name" value="Cyt_b/b6_N"/>
</dbReference>
<dbReference type="InterPro" id="IPR027387">
    <property type="entry name" value="Cytb/b6-like_sf"/>
</dbReference>
<dbReference type="InterPro" id="IPR030689">
    <property type="entry name" value="Cytochrome_b"/>
</dbReference>
<dbReference type="InterPro" id="IPR048260">
    <property type="entry name" value="Cytochrome_b_C_euk/bac"/>
</dbReference>
<dbReference type="InterPro" id="IPR048259">
    <property type="entry name" value="Cytochrome_b_N_euk/bac"/>
</dbReference>
<dbReference type="InterPro" id="IPR016174">
    <property type="entry name" value="Di-haem_cyt_TM"/>
</dbReference>
<dbReference type="PANTHER" id="PTHR19271">
    <property type="entry name" value="CYTOCHROME B"/>
    <property type="match status" value="1"/>
</dbReference>
<dbReference type="PANTHER" id="PTHR19271:SF16">
    <property type="entry name" value="CYTOCHROME B"/>
    <property type="match status" value="1"/>
</dbReference>
<dbReference type="Pfam" id="PF00032">
    <property type="entry name" value="Cytochrom_B_C"/>
    <property type="match status" value="1"/>
</dbReference>
<dbReference type="Pfam" id="PF00033">
    <property type="entry name" value="Cytochrome_B"/>
    <property type="match status" value="1"/>
</dbReference>
<dbReference type="PIRSF" id="PIRSF038885">
    <property type="entry name" value="COB"/>
    <property type="match status" value="1"/>
</dbReference>
<dbReference type="SUPFAM" id="SSF81648">
    <property type="entry name" value="a domain/subunit of cytochrome bc1 complex (Ubiquinol-cytochrome c reductase)"/>
    <property type="match status" value="1"/>
</dbReference>
<dbReference type="SUPFAM" id="SSF81342">
    <property type="entry name" value="Transmembrane di-heme cytochromes"/>
    <property type="match status" value="1"/>
</dbReference>
<dbReference type="PROSITE" id="PS51003">
    <property type="entry name" value="CYTB_CTER"/>
    <property type="match status" value="1"/>
</dbReference>
<dbReference type="PROSITE" id="PS51002">
    <property type="entry name" value="CYTB_NTER"/>
    <property type="match status" value="1"/>
</dbReference>
<organism>
    <name type="scientific">Dictyostelium discoideum</name>
    <name type="common">Social amoeba</name>
    <dbReference type="NCBI Taxonomy" id="44689"/>
    <lineage>
        <taxon>Eukaryota</taxon>
        <taxon>Amoebozoa</taxon>
        <taxon>Evosea</taxon>
        <taxon>Eumycetozoa</taxon>
        <taxon>Dictyostelia</taxon>
        <taxon>Dictyosteliales</taxon>
        <taxon>Dictyosteliaceae</taxon>
        <taxon>Dictyostelium</taxon>
    </lineage>
</organism>
<accession>Q37311</accession>
<geneLocation type="mitochondrion"/>
<comment type="function">
    <text evidence="2">Component of the ubiquinol-cytochrome c reductase complex (complex III or cytochrome b-c1 complex) that is part of the mitochondrial respiratory chain. The b-c1 complex mediates electron transfer from ubiquinol to cytochrome c. Contributes to the generation of a proton gradient across the mitochondrial membrane that is then used for ATP synthesis.</text>
</comment>
<comment type="cofactor">
    <cofactor evidence="2">
        <name>heme b</name>
        <dbReference type="ChEBI" id="CHEBI:60344"/>
    </cofactor>
    <text evidence="2">Binds 2 heme b groups non-covalently.</text>
</comment>
<comment type="subunit">
    <text evidence="1">The main subunits of complex b-c1 are: cytochrome b, cytochrome c1 and the Rieske protein.</text>
</comment>
<comment type="subcellular location">
    <subcellularLocation>
        <location evidence="2">Mitochondrion inner membrane</location>
        <topology evidence="2">Multi-pass membrane protein</topology>
    </subcellularLocation>
</comment>
<comment type="miscellaneous">
    <text evidence="1">Heme 1 (or BL or b562) is low-potential and absorbs at about 562 nm, and heme 2 (or BH or b566) is high-potential and absorbs at about 566 nm.</text>
</comment>
<comment type="similarity">
    <text evidence="4 5">Belongs to the cytochrome b family.</text>
</comment>
<comment type="caution">
    <text evidence="2">The protein contains an even number of transmembrane helices, fewer than predicted by bioinformatics tools.</text>
</comment>
<gene>
    <name type="primary">cytB</name>
    <name type="synonym">cob</name>
    <name type="synonym">mtcyb</name>
    <name type="ORF">DDB_G0294078</name>
</gene>
<keyword id="KW-0249">Electron transport</keyword>
<keyword id="KW-0349">Heme</keyword>
<keyword id="KW-0408">Iron</keyword>
<keyword id="KW-0472">Membrane</keyword>
<keyword id="KW-0479">Metal-binding</keyword>
<keyword id="KW-0496">Mitochondrion</keyword>
<keyword id="KW-0999">Mitochondrion inner membrane</keyword>
<keyword id="KW-1185">Reference proteome</keyword>
<keyword id="KW-0679">Respiratory chain</keyword>
<keyword id="KW-0812">Transmembrane</keyword>
<keyword id="KW-1133">Transmembrane helix</keyword>
<keyword id="KW-0813">Transport</keyword>
<keyword id="KW-0830">Ubiquinone</keyword>
<sequence>MRLVKKNVVINGIYEAGVRYPEPANISYLWNFGFFSLICLIIQLVSGILLAMHYSAHVDLAFNSIERLVREVDYGWLLRYIHANGASFFFIVVYIHMLRGLYFGSYQKPNAMLWVSGVVIFLLLIITGFLGYVLPWGQMSYWAATVITNLVTVLPVIGEDIVIWLWGGFNVDNPTLNRFFSLHYLCPFIIVGLVGLHIIFLRENGSTNPLGVKSHVDQIPFTPYFTIKDLFSFMIFLVLFFTFVFFAPNYLGHPDNYLMADSNVTPAHIVPEWYLLPFYAMLRSIPNKVLGVLALVLAIVVLAFLPFLTIAEVRSSYFRKIHKHLFWSFLALCFFLGFLGSQPAAAPYLICGLYSTIAYFIYILVLFPCIYIVEKMIIKTIMKTTVKKA</sequence>
<evidence type="ECO:0000250" key="1"/>
<evidence type="ECO:0000250" key="2">
    <source>
        <dbReference type="UniProtKB" id="P00163"/>
    </source>
</evidence>
<evidence type="ECO:0000255" key="3"/>
<evidence type="ECO:0000255" key="4">
    <source>
        <dbReference type="PROSITE-ProRule" id="PRU00967"/>
    </source>
</evidence>
<evidence type="ECO:0000255" key="5">
    <source>
        <dbReference type="PROSITE-ProRule" id="PRU00968"/>
    </source>
</evidence>
<protein>
    <recommendedName>
        <fullName>Cytochrome b</fullName>
    </recommendedName>
    <alternativeName>
        <fullName>Complex III subunit 3</fullName>
    </alternativeName>
    <alternativeName>
        <fullName>Complex III subunit III</fullName>
    </alternativeName>
    <alternativeName>
        <fullName>Cytochrome b-c1 complex subunit 3</fullName>
    </alternativeName>
    <alternativeName>
        <fullName>Ubiquinol-cytochrome-c reductase complex cytochrome b subunit</fullName>
    </alternativeName>
</protein>
<reference key="1">
    <citation type="journal article" date="1995" name="Curr. Genet.">
        <title>Codon usage, genetic code and phylogeny of Dictyostelium discoideum mitochondrial DNA as deduced from a 7.3-kb region.</title>
        <authorList>
            <person name="Angata K."/>
            <person name="Kuroe K."/>
            <person name="Yanagisawa K."/>
            <person name="Tanaka Y."/>
        </authorList>
    </citation>
    <scope>NUCLEOTIDE SEQUENCE [GENOMIC DNA]</scope>
    <source>
        <strain>AX3</strain>
    </source>
</reference>
<reference key="2">
    <citation type="journal article" date="2000" name="Mol. Gen. Genet.">
        <title>The mitochondrial DNA of Dictyostelium discoideum: complete sequence, gene content and genome organization.</title>
        <authorList>
            <person name="Ogawa S."/>
            <person name="Yoshino R."/>
            <person name="Angata K."/>
            <person name="Iwamoto M."/>
            <person name="Pi M."/>
            <person name="Kuroe K."/>
            <person name="Matsuo K."/>
            <person name="Morio T."/>
            <person name="Urushihara H."/>
            <person name="Yanagisawa K."/>
            <person name="Tanaka Y."/>
        </authorList>
    </citation>
    <scope>NUCLEOTIDE SEQUENCE [LARGE SCALE GENOMIC DNA]</scope>
    <source>
        <strain>AX3</strain>
    </source>
</reference>
<feature type="chain" id="PRO_0000060883" description="Cytochrome b">
    <location>
        <begin position="1"/>
        <end position="389"/>
    </location>
</feature>
<feature type="transmembrane region" description="Helical" evidence="2">
    <location>
        <begin position="32"/>
        <end position="52"/>
    </location>
</feature>
<feature type="transmembrane region" description="Helical" evidence="2">
    <location>
        <begin position="76"/>
        <end position="98"/>
    </location>
</feature>
<feature type="transmembrane region" description="Helical" evidence="2">
    <location>
        <begin position="113"/>
        <end position="133"/>
    </location>
</feature>
<feature type="transmembrane region" description="Helical" evidence="2">
    <location>
        <begin position="179"/>
        <end position="199"/>
    </location>
</feature>
<feature type="transmembrane region" description="Helical" evidence="2">
    <location>
        <begin position="225"/>
        <end position="245"/>
    </location>
</feature>
<feature type="transmembrane region" description="Helical" evidence="3">
    <location>
        <begin position="290"/>
        <end position="310"/>
    </location>
</feature>
<feature type="transmembrane region" description="Helical" evidence="3">
    <location>
        <begin position="325"/>
        <end position="345"/>
    </location>
</feature>
<feature type="transmembrane region" description="Helical" evidence="3">
    <location>
        <begin position="353"/>
        <end position="373"/>
    </location>
</feature>
<feature type="binding site" description="axial binding residue" evidence="2">
    <location>
        <position position="82"/>
    </location>
    <ligand>
        <name>heme b</name>
        <dbReference type="ChEBI" id="CHEBI:60344"/>
        <label>b562</label>
    </ligand>
    <ligandPart>
        <name>Fe</name>
        <dbReference type="ChEBI" id="CHEBI:18248"/>
    </ligandPart>
</feature>
<feature type="binding site" description="axial binding residue" evidence="2">
    <location>
        <position position="96"/>
    </location>
    <ligand>
        <name>heme b</name>
        <dbReference type="ChEBI" id="CHEBI:60344"/>
        <label>b566</label>
    </ligand>
    <ligandPart>
        <name>Fe</name>
        <dbReference type="ChEBI" id="CHEBI:18248"/>
    </ligandPart>
</feature>
<feature type="binding site" description="axial binding residue" evidence="2">
    <location>
        <position position="183"/>
    </location>
    <ligand>
        <name>heme b</name>
        <dbReference type="ChEBI" id="CHEBI:60344"/>
        <label>b562</label>
    </ligand>
    <ligandPart>
        <name>Fe</name>
        <dbReference type="ChEBI" id="CHEBI:18248"/>
    </ligandPart>
</feature>
<feature type="binding site" description="axial binding residue" evidence="2">
    <location>
        <position position="197"/>
    </location>
    <ligand>
        <name>heme b</name>
        <dbReference type="ChEBI" id="CHEBI:60344"/>
        <label>b566</label>
    </ligand>
    <ligandPart>
        <name>Fe</name>
        <dbReference type="ChEBI" id="CHEBI:18248"/>
    </ligandPart>
</feature>